<evidence type="ECO:0000255" key="1">
    <source>
        <dbReference type="HAMAP-Rule" id="MF_00061"/>
    </source>
</evidence>
<proteinExistence type="inferred from homology"/>
<reference key="1">
    <citation type="submission" date="2006-10" db="EMBL/GenBank/DDBJ databases">
        <authorList>
            <person name="Fleischmann R.D."/>
            <person name="Dodson R.J."/>
            <person name="Haft D.H."/>
            <person name="Merkel J.S."/>
            <person name="Nelson W.C."/>
            <person name="Fraser C.M."/>
        </authorList>
    </citation>
    <scope>NUCLEOTIDE SEQUENCE [LARGE SCALE GENOMIC DNA]</scope>
    <source>
        <strain>104</strain>
    </source>
</reference>
<dbReference type="EC" id="2.7.1.148" evidence="1"/>
<dbReference type="EMBL" id="CP000479">
    <property type="protein sequence ID" value="ABK67883.1"/>
    <property type="molecule type" value="Genomic_DNA"/>
</dbReference>
<dbReference type="RefSeq" id="WP_011723971.1">
    <property type="nucleotide sequence ID" value="NC_008595.1"/>
</dbReference>
<dbReference type="SMR" id="A0QBW1"/>
<dbReference type="KEGG" id="mav:MAV_1149"/>
<dbReference type="HOGENOM" id="CLU_053057_1_1_11"/>
<dbReference type="UniPathway" id="UPA00056">
    <property type="reaction ID" value="UER00094"/>
</dbReference>
<dbReference type="Proteomes" id="UP000001574">
    <property type="component" value="Chromosome"/>
</dbReference>
<dbReference type="GO" id="GO:0050515">
    <property type="term" value="F:4-(cytidine 5'-diphospho)-2-C-methyl-D-erythritol kinase activity"/>
    <property type="evidence" value="ECO:0007669"/>
    <property type="project" value="UniProtKB-UniRule"/>
</dbReference>
<dbReference type="GO" id="GO:0005524">
    <property type="term" value="F:ATP binding"/>
    <property type="evidence" value="ECO:0007669"/>
    <property type="project" value="UniProtKB-UniRule"/>
</dbReference>
<dbReference type="GO" id="GO:0019288">
    <property type="term" value="P:isopentenyl diphosphate biosynthetic process, methylerythritol 4-phosphate pathway"/>
    <property type="evidence" value="ECO:0007669"/>
    <property type="project" value="UniProtKB-UniRule"/>
</dbReference>
<dbReference type="GO" id="GO:0016114">
    <property type="term" value="P:terpenoid biosynthetic process"/>
    <property type="evidence" value="ECO:0007669"/>
    <property type="project" value="InterPro"/>
</dbReference>
<dbReference type="FunFam" id="3.30.230.10:FF:000076">
    <property type="entry name" value="4-diphosphocytidyl-2-C-methyl-D-erythritol kinase"/>
    <property type="match status" value="1"/>
</dbReference>
<dbReference type="Gene3D" id="3.30.230.10">
    <property type="match status" value="1"/>
</dbReference>
<dbReference type="Gene3D" id="3.30.70.890">
    <property type="entry name" value="GHMP kinase, C-terminal domain"/>
    <property type="match status" value="1"/>
</dbReference>
<dbReference type="HAMAP" id="MF_00061">
    <property type="entry name" value="IspE"/>
    <property type="match status" value="1"/>
</dbReference>
<dbReference type="InterPro" id="IPR013750">
    <property type="entry name" value="GHMP_kinase_C_dom"/>
</dbReference>
<dbReference type="InterPro" id="IPR036554">
    <property type="entry name" value="GHMP_kinase_C_sf"/>
</dbReference>
<dbReference type="InterPro" id="IPR006204">
    <property type="entry name" value="GHMP_kinase_N_dom"/>
</dbReference>
<dbReference type="InterPro" id="IPR004424">
    <property type="entry name" value="IspE"/>
</dbReference>
<dbReference type="InterPro" id="IPR020568">
    <property type="entry name" value="Ribosomal_Su5_D2-typ_SF"/>
</dbReference>
<dbReference type="InterPro" id="IPR014721">
    <property type="entry name" value="Ribsml_uS5_D2-typ_fold_subgr"/>
</dbReference>
<dbReference type="NCBIfam" id="TIGR00154">
    <property type="entry name" value="ispE"/>
    <property type="match status" value="1"/>
</dbReference>
<dbReference type="NCBIfam" id="NF002870">
    <property type="entry name" value="PRK03188.1"/>
    <property type="match status" value="1"/>
</dbReference>
<dbReference type="PANTHER" id="PTHR43527">
    <property type="entry name" value="4-DIPHOSPHOCYTIDYL-2-C-METHYL-D-ERYTHRITOL KINASE, CHLOROPLASTIC"/>
    <property type="match status" value="1"/>
</dbReference>
<dbReference type="PANTHER" id="PTHR43527:SF2">
    <property type="entry name" value="4-DIPHOSPHOCYTIDYL-2-C-METHYL-D-ERYTHRITOL KINASE, CHLOROPLASTIC"/>
    <property type="match status" value="1"/>
</dbReference>
<dbReference type="Pfam" id="PF08544">
    <property type="entry name" value="GHMP_kinases_C"/>
    <property type="match status" value="1"/>
</dbReference>
<dbReference type="Pfam" id="PF00288">
    <property type="entry name" value="GHMP_kinases_N"/>
    <property type="match status" value="1"/>
</dbReference>
<dbReference type="PIRSF" id="PIRSF010376">
    <property type="entry name" value="IspE"/>
    <property type="match status" value="1"/>
</dbReference>
<dbReference type="SUPFAM" id="SSF55060">
    <property type="entry name" value="GHMP Kinase, C-terminal domain"/>
    <property type="match status" value="1"/>
</dbReference>
<dbReference type="SUPFAM" id="SSF54211">
    <property type="entry name" value="Ribosomal protein S5 domain 2-like"/>
    <property type="match status" value="1"/>
</dbReference>
<gene>
    <name evidence="1" type="primary">ispE</name>
    <name type="ordered locus">MAV_1149</name>
</gene>
<keyword id="KW-0067">ATP-binding</keyword>
<keyword id="KW-0414">Isoprene biosynthesis</keyword>
<keyword id="KW-0418">Kinase</keyword>
<keyword id="KW-0547">Nucleotide-binding</keyword>
<keyword id="KW-0808">Transferase</keyword>
<sequence>MSDGNTAAAWVPTGSVTVRVPGKVNLYLAVGDRREDGYHELTTIFQAVSLLDEVTVRNADVLSLDIVGEGADKLPTDERNLAWQAAELMAEHVGRAPDVSIMIDKSIPVAGGMAGGSADAAAVLVAMNSLWELNVPRRDLRMLAAQLGSDVPFALHGGTALGTGRGEELATVLSRNTFHWVLAFADGELLTRKVFAELDRLRRAGDPPRLPGPGPVLAALAAGDADQLAPLLGNEMQAAAVSLNPGLRRTLRAGVQAGALAGIVSGSGPTCAFLCPSAAAAVDVGTEVSGVGVCRTVRVASGPVAGARVVPAPTEV</sequence>
<name>ISPE_MYCA1</name>
<protein>
    <recommendedName>
        <fullName evidence="1">4-diphosphocytidyl-2-C-methyl-D-erythritol kinase</fullName>
        <shortName evidence="1">CMK</shortName>
        <ecNumber evidence="1">2.7.1.148</ecNumber>
    </recommendedName>
    <alternativeName>
        <fullName evidence="1">4-(cytidine-5'-diphospho)-2-C-methyl-D-erythritol kinase</fullName>
    </alternativeName>
</protein>
<comment type="function">
    <text evidence="1">Catalyzes the phosphorylation of the position 2 hydroxy group of 4-diphosphocytidyl-2C-methyl-D-erythritol.</text>
</comment>
<comment type="catalytic activity">
    <reaction evidence="1">
        <text>4-CDP-2-C-methyl-D-erythritol + ATP = 4-CDP-2-C-methyl-D-erythritol 2-phosphate + ADP + H(+)</text>
        <dbReference type="Rhea" id="RHEA:18437"/>
        <dbReference type="ChEBI" id="CHEBI:15378"/>
        <dbReference type="ChEBI" id="CHEBI:30616"/>
        <dbReference type="ChEBI" id="CHEBI:57823"/>
        <dbReference type="ChEBI" id="CHEBI:57919"/>
        <dbReference type="ChEBI" id="CHEBI:456216"/>
        <dbReference type="EC" id="2.7.1.148"/>
    </reaction>
</comment>
<comment type="pathway">
    <text evidence="1">Isoprenoid biosynthesis; isopentenyl diphosphate biosynthesis via DXP pathway; isopentenyl diphosphate from 1-deoxy-D-xylulose 5-phosphate: step 3/6.</text>
</comment>
<comment type="similarity">
    <text evidence="1">Belongs to the GHMP kinase family. IspE subfamily.</text>
</comment>
<accession>A0QBW1</accession>
<organism>
    <name type="scientific">Mycobacterium avium (strain 104)</name>
    <dbReference type="NCBI Taxonomy" id="243243"/>
    <lineage>
        <taxon>Bacteria</taxon>
        <taxon>Bacillati</taxon>
        <taxon>Actinomycetota</taxon>
        <taxon>Actinomycetes</taxon>
        <taxon>Mycobacteriales</taxon>
        <taxon>Mycobacteriaceae</taxon>
        <taxon>Mycobacterium</taxon>
        <taxon>Mycobacterium avium complex (MAC)</taxon>
    </lineage>
</organism>
<feature type="chain" id="PRO_0000335728" description="4-diphosphocytidyl-2-C-methyl-D-erythritol kinase">
    <location>
        <begin position="1"/>
        <end position="316"/>
    </location>
</feature>
<feature type="active site" evidence="1">
    <location>
        <position position="23"/>
    </location>
</feature>
<feature type="active site" evidence="1">
    <location>
        <position position="150"/>
    </location>
</feature>
<feature type="binding site" evidence="1">
    <location>
        <begin position="108"/>
        <end position="118"/>
    </location>
    <ligand>
        <name>ATP</name>
        <dbReference type="ChEBI" id="CHEBI:30616"/>
    </ligand>
</feature>